<reference key="1">
    <citation type="journal article" date="2007" name="J. Bacteriol.">
        <title>The genome sequence of avian pathogenic Escherichia coli strain O1:K1:H7 shares strong similarities with human extraintestinal pathogenic E. coli genomes.</title>
        <authorList>
            <person name="Johnson T.J."/>
            <person name="Kariyawasam S."/>
            <person name="Wannemuehler Y."/>
            <person name="Mangiamele P."/>
            <person name="Johnson S.J."/>
            <person name="Doetkott C."/>
            <person name="Skyberg J.A."/>
            <person name="Lynne A.M."/>
            <person name="Johnson J.R."/>
            <person name="Nolan L.K."/>
        </authorList>
    </citation>
    <scope>NUCLEOTIDE SEQUENCE [LARGE SCALE GENOMIC DNA]</scope>
</reference>
<accession>A1AHE2</accession>
<dbReference type="EC" id="1.1.-.-" evidence="1"/>
<dbReference type="EMBL" id="CP000468">
    <property type="protein sequence ID" value="ABJ03082.1"/>
    <property type="molecule type" value="Genomic_DNA"/>
</dbReference>
<dbReference type="RefSeq" id="WP_000586967.1">
    <property type="nucleotide sequence ID" value="NC_008563.1"/>
</dbReference>
<dbReference type="SMR" id="A1AHE2"/>
<dbReference type="KEGG" id="ecv:APECO1_2850"/>
<dbReference type="HOGENOM" id="CLU_020639_0_0_6"/>
<dbReference type="Proteomes" id="UP000008216">
    <property type="component" value="Chromosome"/>
</dbReference>
<dbReference type="GO" id="GO:0005886">
    <property type="term" value="C:plasma membrane"/>
    <property type="evidence" value="ECO:0007669"/>
    <property type="project" value="UniProtKB-SubCell"/>
</dbReference>
<dbReference type="GO" id="GO:0010181">
    <property type="term" value="F:FMN binding"/>
    <property type="evidence" value="ECO:0007669"/>
    <property type="project" value="InterPro"/>
</dbReference>
<dbReference type="GO" id="GO:0004459">
    <property type="term" value="F:L-lactate dehydrogenase activity"/>
    <property type="evidence" value="ECO:0007669"/>
    <property type="project" value="UniProtKB-UniRule"/>
</dbReference>
<dbReference type="GO" id="GO:0009060">
    <property type="term" value="P:aerobic respiration"/>
    <property type="evidence" value="ECO:0007669"/>
    <property type="project" value="TreeGrafter"/>
</dbReference>
<dbReference type="GO" id="GO:0006089">
    <property type="term" value="P:lactate metabolic process"/>
    <property type="evidence" value="ECO:0007669"/>
    <property type="project" value="UniProtKB-UniRule"/>
</dbReference>
<dbReference type="CDD" id="cd02809">
    <property type="entry name" value="alpha_hydroxyacid_oxid_FMN"/>
    <property type="match status" value="1"/>
</dbReference>
<dbReference type="FunFam" id="3.20.20.70:FF:000029">
    <property type="entry name" value="L-lactate dehydrogenase"/>
    <property type="match status" value="1"/>
</dbReference>
<dbReference type="Gene3D" id="3.20.20.70">
    <property type="entry name" value="Aldolase class I"/>
    <property type="match status" value="1"/>
</dbReference>
<dbReference type="HAMAP" id="MF_01559">
    <property type="entry name" value="L_lact_dehydr"/>
    <property type="match status" value="1"/>
</dbReference>
<dbReference type="InterPro" id="IPR013785">
    <property type="entry name" value="Aldolase_TIM"/>
</dbReference>
<dbReference type="InterPro" id="IPR012133">
    <property type="entry name" value="Alpha-hydoxy_acid_DH_FMN"/>
</dbReference>
<dbReference type="InterPro" id="IPR000262">
    <property type="entry name" value="FMN-dep_DH"/>
</dbReference>
<dbReference type="InterPro" id="IPR037396">
    <property type="entry name" value="FMN_HAD"/>
</dbReference>
<dbReference type="InterPro" id="IPR008259">
    <property type="entry name" value="FMN_hydac_DH_AS"/>
</dbReference>
<dbReference type="InterPro" id="IPR020920">
    <property type="entry name" value="LldD"/>
</dbReference>
<dbReference type="NCBIfam" id="NF033901">
    <property type="entry name" value="L_lactate_LldD"/>
    <property type="match status" value="1"/>
</dbReference>
<dbReference type="NCBIfam" id="NF008398">
    <property type="entry name" value="PRK11197.1"/>
    <property type="match status" value="1"/>
</dbReference>
<dbReference type="PANTHER" id="PTHR10578:SF85">
    <property type="entry name" value="L-LACTATE DEHYDROGENASE"/>
    <property type="match status" value="1"/>
</dbReference>
<dbReference type="PANTHER" id="PTHR10578">
    <property type="entry name" value="S -2-HYDROXY-ACID OXIDASE-RELATED"/>
    <property type="match status" value="1"/>
</dbReference>
<dbReference type="Pfam" id="PF01070">
    <property type="entry name" value="FMN_dh"/>
    <property type="match status" value="1"/>
</dbReference>
<dbReference type="PIRSF" id="PIRSF000138">
    <property type="entry name" value="Al-hdrx_acd_dh"/>
    <property type="match status" value="1"/>
</dbReference>
<dbReference type="SUPFAM" id="SSF51395">
    <property type="entry name" value="FMN-linked oxidoreductases"/>
    <property type="match status" value="1"/>
</dbReference>
<dbReference type="PROSITE" id="PS00557">
    <property type="entry name" value="FMN_HYDROXY_ACID_DH_1"/>
    <property type="match status" value="1"/>
</dbReference>
<dbReference type="PROSITE" id="PS51349">
    <property type="entry name" value="FMN_HYDROXY_ACID_DH_2"/>
    <property type="match status" value="1"/>
</dbReference>
<evidence type="ECO:0000255" key="1">
    <source>
        <dbReference type="HAMAP-Rule" id="MF_01559"/>
    </source>
</evidence>
<feature type="chain" id="PRO_1000068981" description="L-lactate dehydrogenase">
    <location>
        <begin position="1"/>
        <end position="396"/>
    </location>
</feature>
<feature type="domain" description="FMN hydroxy acid dehydrogenase" evidence="1">
    <location>
        <begin position="1"/>
        <end position="380"/>
    </location>
</feature>
<feature type="active site" description="Proton acceptor" evidence="1">
    <location>
        <position position="275"/>
    </location>
</feature>
<feature type="binding site" evidence="1">
    <location>
        <position position="24"/>
    </location>
    <ligand>
        <name>substrate</name>
    </ligand>
</feature>
<feature type="binding site" evidence="1">
    <location>
        <position position="106"/>
    </location>
    <ligand>
        <name>FMN</name>
        <dbReference type="ChEBI" id="CHEBI:58210"/>
    </ligand>
</feature>
<feature type="binding site" evidence="1">
    <location>
        <position position="127"/>
    </location>
    <ligand>
        <name>FMN</name>
        <dbReference type="ChEBI" id="CHEBI:58210"/>
    </ligand>
</feature>
<feature type="binding site" evidence="1">
    <location>
        <position position="129"/>
    </location>
    <ligand>
        <name>substrate</name>
    </ligand>
</feature>
<feature type="binding site" evidence="1">
    <location>
        <position position="155"/>
    </location>
    <ligand>
        <name>FMN</name>
        <dbReference type="ChEBI" id="CHEBI:58210"/>
    </ligand>
</feature>
<feature type="binding site" evidence="1">
    <location>
        <position position="164"/>
    </location>
    <ligand>
        <name>substrate</name>
    </ligand>
</feature>
<feature type="binding site" evidence="1">
    <location>
        <position position="251"/>
    </location>
    <ligand>
        <name>FMN</name>
        <dbReference type="ChEBI" id="CHEBI:58210"/>
    </ligand>
</feature>
<feature type="binding site" evidence="1">
    <location>
        <position position="278"/>
    </location>
    <ligand>
        <name>substrate</name>
    </ligand>
</feature>
<feature type="binding site" evidence="1">
    <location>
        <begin position="306"/>
        <end position="330"/>
    </location>
    <ligand>
        <name>FMN</name>
        <dbReference type="ChEBI" id="CHEBI:58210"/>
    </ligand>
</feature>
<organism>
    <name type="scientific">Escherichia coli O1:K1 / APEC</name>
    <dbReference type="NCBI Taxonomy" id="405955"/>
    <lineage>
        <taxon>Bacteria</taxon>
        <taxon>Pseudomonadati</taxon>
        <taxon>Pseudomonadota</taxon>
        <taxon>Gammaproteobacteria</taxon>
        <taxon>Enterobacterales</taxon>
        <taxon>Enterobacteriaceae</taxon>
        <taxon>Escherichia</taxon>
    </lineage>
</organism>
<sequence length="396" mass="42717">MIISAASDYRAAAQRILPPFLFHYMDGGAYSEYTLRRNVEDLSEVALRQRILKNMSDLSLETTLFNEKLSMPVALGPVGLCGMYARRGEVQAAKAADAHGIPFTLSTVSVCPIEEVAPAIKRPMWFQLYVLRDRGFMRNALERAKAAGCSTLVFTVDMPTPGARYRDAHSGMSGPNAAMRRYLQAVTHPQWAWDVGLNGRPHDLGNISAYLGKPTGLEDYIGWLANNFDPSISWKDLEWIRDFWDGPMVIKGILDPEDARDAVRFGADGIVVSNHGGRQLDGVLSSACALPAIADAVKGDIAILADSGIRNGLDVVRMIALGADTVLLGRAFLYALATAGQAGVANLLNLIEKEMKVAMTLTGAKSISEITQDSLVQVLGKELPAALAPMAKGNAA</sequence>
<protein>
    <recommendedName>
        <fullName evidence="1">L-lactate dehydrogenase</fullName>
        <ecNumber evidence="1">1.1.-.-</ecNumber>
    </recommendedName>
</protein>
<proteinExistence type="inferred from homology"/>
<name>LLDD_ECOK1</name>
<comment type="function">
    <text evidence="1">Catalyzes the conversion of L-lactate to pyruvate. Is coupled to the respiratory chain.</text>
</comment>
<comment type="catalytic activity">
    <reaction evidence="1">
        <text>(S)-lactate + A = pyruvate + AH2</text>
        <dbReference type="Rhea" id="RHEA:45816"/>
        <dbReference type="ChEBI" id="CHEBI:13193"/>
        <dbReference type="ChEBI" id="CHEBI:15361"/>
        <dbReference type="ChEBI" id="CHEBI:16651"/>
        <dbReference type="ChEBI" id="CHEBI:17499"/>
    </reaction>
</comment>
<comment type="cofactor">
    <cofactor evidence="1">
        <name>FMN</name>
        <dbReference type="ChEBI" id="CHEBI:58210"/>
    </cofactor>
</comment>
<comment type="subcellular location">
    <subcellularLocation>
        <location evidence="1">Cell inner membrane</location>
        <topology evidence="1">Peripheral membrane protein</topology>
    </subcellularLocation>
</comment>
<comment type="similarity">
    <text evidence="1">Belongs to the FMN-dependent alpha-hydroxy acid dehydrogenase family.</text>
</comment>
<gene>
    <name evidence="1" type="primary">lldD</name>
    <name type="ordered locus">Ecok1_35880</name>
    <name type="ORF">APECO1_2850</name>
</gene>
<keyword id="KW-0997">Cell inner membrane</keyword>
<keyword id="KW-1003">Cell membrane</keyword>
<keyword id="KW-0285">Flavoprotein</keyword>
<keyword id="KW-0288">FMN</keyword>
<keyword id="KW-0472">Membrane</keyword>
<keyword id="KW-0560">Oxidoreductase</keyword>
<keyword id="KW-1185">Reference proteome</keyword>